<reference key="1">
    <citation type="journal article" date="2005" name="Nucleic Acids Res.">
        <title>Genome dynamics and diversity of Shigella species, the etiologic agents of bacillary dysentery.</title>
        <authorList>
            <person name="Yang F."/>
            <person name="Yang J."/>
            <person name="Zhang X."/>
            <person name="Chen L."/>
            <person name="Jiang Y."/>
            <person name="Yan Y."/>
            <person name="Tang X."/>
            <person name="Wang J."/>
            <person name="Xiong Z."/>
            <person name="Dong J."/>
            <person name="Xue Y."/>
            <person name="Zhu Y."/>
            <person name="Xu X."/>
            <person name="Sun L."/>
            <person name="Chen S."/>
            <person name="Nie H."/>
            <person name="Peng J."/>
            <person name="Xu J."/>
            <person name="Wang Y."/>
            <person name="Yuan Z."/>
            <person name="Wen Y."/>
            <person name="Yao Z."/>
            <person name="Shen Y."/>
            <person name="Qiang B."/>
            <person name="Hou Y."/>
            <person name="Yu J."/>
            <person name="Jin Q."/>
        </authorList>
    </citation>
    <scope>NUCLEOTIDE SEQUENCE [LARGE SCALE GENOMIC DNA]</scope>
    <source>
        <strain>Sb227</strain>
    </source>
</reference>
<accession>Q31VV6</accession>
<gene>
    <name evidence="1" type="primary">rplC</name>
    <name type="ordered locus">SBO_3314</name>
</gene>
<name>RL3_SHIBS</name>
<protein>
    <recommendedName>
        <fullName evidence="1">Large ribosomal subunit protein uL3</fullName>
    </recommendedName>
    <alternativeName>
        <fullName evidence="2">50S ribosomal protein L3</fullName>
    </alternativeName>
</protein>
<comment type="function">
    <text evidence="1">One of the primary rRNA binding proteins, it binds directly near the 3'-end of the 23S rRNA, where it nucleates assembly of the 50S subunit.</text>
</comment>
<comment type="subunit">
    <text evidence="1">Part of the 50S ribosomal subunit. Forms a cluster with proteins L14 and L19.</text>
</comment>
<comment type="PTM">
    <text evidence="1">Methylated by PrmB.</text>
</comment>
<comment type="similarity">
    <text evidence="1">Belongs to the universal ribosomal protein uL3 family.</text>
</comment>
<feature type="chain" id="PRO_0000241409" description="Large ribosomal subunit protein uL3">
    <location>
        <begin position="1"/>
        <end position="209"/>
    </location>
</feature>
<feature type="modified residue" description="N5-methylglutamine" evidence="1">
    <location>
        <position position="150"/>
    </location>
</feature>
<dbReference type="EMBL" id="CP000036">
    <property type="protein sequence ID" value="ABB67802.1"/>
    <property type="molecule type" value="Genomic_DNA"/>
</dbReference>
<dbReference type="RefSeq" id="WP_000579833.1">
    <property type="nucleotide sequence ID" value="NC_007613.1"/>
</dbReference>
<dbReference type="SMR" id="Q31VV6"/>
<dbReference type="GeneID" id="86948184"/>
<dbReference type="KEGG" id="sbo:SBO_3314"/>
<dbReference type="HOGENOM" id="CLU_044142_4_1_6"/>
<dbReference type="Proteomes" id="UP000007067">
    <property type="component" value="Chromosome"/>
</dbReference>
<dbReference type="GO" id="GO:0022625">
    <property type="term" value="C:cytosolic large ribosomal subunit"/>
    <property type="evidence" value="ECO:0007669"/>
    <property type="project" value="TreeGrafter"/>
</dbReference>
<dbReference type="GO" id="GO:0019843">
    <property type="term" value="F:rRNA binding"/>
    <property type="evidence" value="ECO:0007669"/>
    <property type="project" value="UniProtKB-UniRule"/>
</dbReference>
<dbReference type="GO" id="GO:0003735">
    <property type="term" value="F:structural constituent of ribosome"/>
    <property type="evidence" value="ECO:0007669"/>
    <property type="project" value="InterPro"/>
</dbReference>
<dbReference type="GO" id="GO:0006412">
    <property type="term" value="P:translation"/>
    <property type="evidence" value="ECO:0007669"/>
    <property type="project" value="UniProtKB-UniRule"/>
</dbReference>
<dbReference type="FunFam" id="2.40.30.10:FF:000004">
    <property type="entry name" value="50S ribosomal protein L3"/>
    <property type="match status" value="1"/>
</dbReference>
<dbReference type="FunFam" id="3.30.160.810:FF:000001">
    <property type="entry name" value="50S ribosomal protein L3"/>
    <property type="match status" value="1"/>
</dbReference>
<dbReference type="Gene3D" id="3.30.160.810">
    <property type="match status" value="1"/>
</dbReference>
<dbReference type="Gene3D" id="2.40.30.10">
    <property type="entry name" value="Translation factors"/>
    <property type="match status" value="1"/>
</dbReference>
<dbReference type="HAMAP" id="MF_01325_B">
    <property type="entry name" value="Ribosomal_uL3_B"/>
    <property type="match status" value="1"/>
</dbReference>
<dbReference type="InterPro" id="IPR000597">
    <property type="entry name" value="Ribosomal_uL3"/>
</dbReference>
<dbReference type="InterPro" id="IPR019927">
    <property type="entry name" value="Ribosomal_uL3_bac/org-type"/>
</dbReference>
<dbReference type="InterPro" id="IPR019926">
    <property type="entry name" value="Ribosomal_uL3_CS"/>
</dbReference>
<dbReference type="InterPro" id="IPR009000">
    <property type="entry name" value="Transl_B-barrel_sf"/>
</dbReference>
<dbReference type="NCBIfam" id="TIGR03625">
    <property type="entry name" value="L3_bact"/>
    <property type="match status" value="1"/>
</dbReference>
<dbReference type="PANTHER" id="PTHR11229">
    <property type="entry name" value="50S RIBOSOMAL PROTEIN L3"/>
    <property type="match status" value="1"/>
</dbReference>
<dbReference type="PANTHER" id="PTHR11229:SF16">
    <property type="entry name" value="LARGE RIBOSOMAL SUBUNIT PROTEIN UL3C"/>
    <property type="match status" value="1"/>
</dbReference>
<dbReference type="Pfam" id="PF00297">
    <property type="entry name" value="Ribosomal_L3"/>
    <property type="match status" value="1"/>
</dbReference>
<dbReference type="SUPFAM" id="SSF50447">
    <property type="entry name" value="Translation proteins"/>
    <property type="match status" value="1"/>
</dbReference>
<dbReference type="PROSITE" id="PS00474">
    <property type="entry name" value="RIBOSOMAL_L3"/>
    <property type="match status" value="1"/>
</dbReference>
<proteinExistence type="inferred from homology"/>
<evidence type="ECO:0000255" key="1">
    <source>
        <dbReference type="HAMAP-Rule" id="MF_01325"/>
    </source>
</evidence>
<evidence type="ECO:0000305" key="2"/>
<keyword id="KW-0488">Methylation</keyword>
<keyword id="KW-0687">Ribonucleoprotein</keyword>
<keyword id="KW-0689">Ribosomal protein</keyword>
<keyword id="KW-0694">RNA-binding</keyword>
<keyword id="KW-0699">rRNA-binding</keyword>
<sequence length="209" mass="22244">MIGLVGKKVGMTRIFTEDGVSIPVTVIEVEANRVTQVKDLANDGYRAIQVTTGAKKANRVTKPEAGHFAKAGVEAGRGLWEFRLAEGEEFTVGQSISVELFADVKKVDVTGTSKGKGFAGTVKRWNFRTQDATHGNSLSHRVPGSIGQNQTPGKVFKGKKMAGQMGNERVTVQSLDVVRVDAERNLLLVKGAVPGATGSDLIVKPAVKA</sequence>
<organism>
    <name type="scientific">Shigella boydii serotype 4 (strain Sb227)</name>
    <dbReference type="NCBI Taxonomy" id="300268"/>
    <lineage>
        <taxon>Bacteria</taxon>
        <taxon>Pseudomonadati</taxon>
        <taxon>Pseudomonadota</taxon>
        <taxon>Gammaproteobacteria</taxon>
        <taxon>Enterobacterales</taxon>
        <taxon>Enterobacteriaceae</taxon>
        <taxon>Shigella</taxon>
    </lineage>
</organism>